<reference key="1">
    <citation type="journal article" date="1996" name="Nucleic Acids Res.">
        <title>Complete sequence analysis of the genome of the bacterium Mycoplasma pneumoniae.</title>
        <authorList>
            <person name="Himmelreich R."/>
            <person name="Hilbert H."/>
            <person name="Plagens H."/>
            <person name="Pirkl E."/>
            <person name="Li B.-C."/>
            <person name="Herrmann R."/>
        </authorList>
    </citation>
    <scope>NUCLEOTIDE SEQUENCE [LARGE SCALE GENOMIC DNA]</scope>
    <source>
        <strain>ATCC 29342 / M129 / Subtype 1</strain>
    </source>
</reference>
<protein>
    <recommendedName>
        <fullName>Uncharacterized protein MG302 homolog</fullName>
    </recommendedName>
</protein>
<keyword id="KW-1003">Cell membrane</keyword>
<keyword id="KW-0472">Membrane</keyword>
<keyword id="KW-1185">Reference proteome</keyword>
<keyword id="KW-0812">Transmembrane</keyword>
<keyword id="KW-1133">Transmembrane helix</keyword>
<evidence type="ECO:0000255" key="1"/>
<evidence type="ECO:0000305" key="2"/>
<name>Y431_MYCPN</name>
<dbReference type="EMBL" id="U00089">
    <property type="protein sequence ID" value="AAB96058.1"/>
    <property type="molecule type" value="Genomic_DNA"/>
</dbReference>
<dbReference type="PIR" id="S73736">
    <property type="entry name" value="S73736"/>
</dbReference>
<dbReference type="RefSeq" id="NP_110119.1">
    <property type="nucleotide sequence ID" value="NC_000912.1"/>
</dbReference>
<dbReference type="RefSeq" id="WP_010874787.1">
    <property type="nucleotide sequence ID" value="NZ_OU342337.1"/>
</dbReference>
<dbReference type="SMR" id="P75357"/>
<dbReference type="STRING" id="272634.MPN_431"/>
<dbReference type="EnsemblBacteria" id="AAB96058">
    <property type="protein sequence ID" value="AAB96058"/>
    <property type="gene ID" value="MPN_431"/>
</dbReference>
<dbReference type="KEGG" id="mpn:MPN_431"/>
<dbReference type="PATRIC" id="fig|272634.6.peg.466"/>
<dbReference type="HOGENOM" id="CLU_876668_0_0_14"/>
<dbReference type="OrthoDB" id="8075495at2"/>
<dbReference type="BioCyc" id="MPNE272634:G1GJ3-697-MONOMER"/>
<dbReference type="Proteomes" id="UP000000808">
    <property type="component" value="Chromosome"/>
</dbReference>
<dbReference type="GO" id="GO:0005886">
    <property type="term" value="C:plasma membrane"/>
    <property type="evidence" value="ECO:0007669"/>
    <property type="project" value="UniProtKB-SubCell"/>
</dbReference>
<dbReference type="CDD" id="cd16914">
    <property type="entry name" value="EcfT"/>
    <property type="match status" value="1"/>
</dbReference>
<dbReference type="InterPro" id="IPR003339">
    <property type="entry name" value="ABC/ECF_trnsptr_transmembrane"/>
</dbReference>
<dbReference type="PANTHER" id="PTHR33514">
    <property type="entry name" value="PROTEIN ABCI12, CHLOROPLASTIC"/>
    <property type="match status" value="1"/>
</dbReference>
<dbReference type="PANTHER" id="PTHR33514:SF13">
    <property type="entry name" value="PROTEIN ABCI12, CHLOROPLASTIC"/>
    <property type="match status" value="1"/>
</dbReference>
<dbReference type="Pfam" id="PF02361">
    <property type="entry name" value="CbiQ"/>
    <property type="match status" value="1"/>
</dbReference>
<organism>
    <name type="scientific">Mycoplasma pneumoniae (strain ATCC 29342 / M129 / Subtype 1)</name>
    <name type="common">Mycoplasmoides pneumoniae</name>
    <dbReference type="NCBI Taxonomy" id="272634"/>
    <lineage>
        <taxon>Bacteria</taxon>
        <taxon>Bacillati</taxon>
        <taxon>Mycoplasmatota</taxon>
        <taxon>Mycoplasmoidales</taxon>
        <taxon>Mycoplasmoidaceae</taxon>
        <taxon>Mycoplasmoides</taxon>
    </lineage>
</organism>
<accession>P75357</accession>
<sequence>MTSKNFLSQLPPVLKLWWWIISLVVAFLPLGLHGLIIINAIFFALVIVVERKLKTFAIIFGWLLFFFWFNIVVNGFIFLPNSSALASQNENFLGHFIYSGGEQFGGVSWWSVNTRSLLRSLVIALRISMLFATSFLLTASTSIYELAFGVERLCTPLRYLKIKTQPLSILFALVFKLLPIVKGELKRIKQAQAIRGFKYGKLAFLNPVKLKTLFIPVLLSTVKKTEAVAFALQAKGYQLDNPNKTHYLQKYNLWGGIVFLGLFVLLSCLLMVNNWHLVYWTNPHYSFTFTHQNFCFFKQISSPQLLAFWQLELLAIG</sequence>
<comment type="subcellular location">
    <subcellularLocation>
        <location evidence="2">Cell membrane</location>
        <topology evidence="2">Multi-pass membrane protein</topology>
    </subcellularLocation>
</comment>
<comment type="similarity">
    <text evidence="2">Belongs to the CbiQ family.</text>
</comment>
<feature type="chain" id="PRO_0000210523" description="Uncharacterized protein MG302 homolog">
    <location>
        <begin position="1"/>
        <end position="317"/>
    </location>
</feature>
<feature type="transmembrane region" description="Helical" evidence="1">
    <location>
        <begin position="18"/>
        <end position="38"/>
    </location>
</feature>
<feature type="transmembrane region" description="Helical" evidence="1">
    <location>
        <begin position="58"/>
        <end position="78"/>
    </location>
</feature>
<feature type="transmembrane region" description="Helical" evidence="1">
    <location>
        <begin position="92"/>
        <end position="112"/>
    </location>
</feature>
<feature type="transmembrane region" description="Helical" evidence="1">
    <location>
        <begin position="130"/>
        <end position="150"/>
    </location>
</feature>
<feature type="transmembrane region" description="Helical" evidence="1">
    <location>
        <begin position="165"/>
        <end position="185"/>
    </location>
</feature>
<feature type="transmembrane region" description="Helical" evidence="1">
    <location>
        <begin position="202"/>
        <end position="222"/>
    </location>
</feature>
<feature type="transmembrane region" description="Helical" evidence="1">
    <location>
        <begin position="253"/>
        <end position="273"/>
    </location>
</feature>
<proteinExistence type="inferred from homology"/>
<gene>
    <name type="ordered locus">MPN_431</name>
    <name type="ORF">A05_orf317</name>
    <name type="ORF">MP410</name>
</gene>